<comment type="function">
    <text evidence="1">Catalyzes the reversible transfer of the terminal phosphate group between ATP and AMP. Plays an important role in cellular energy homeostasis and in adenine nucleotide metabolism.</text>
</comment>
<comment type="catalytic activity">
    <reaction evidence="1">
        <text>AMP + ATP = 2 ADP</text>
        <dbReference type="Rhea" id="RHEA:12973"/>
        <dbReference type="ChEBI" id="CHEBI:30616"/>
        <dbReference type="ChEBI" id="CHEBI:456215"/>
        <dbReference type="ChEBI" id="CHEBI:456216"/>
        <dbReference type="EC" id="2.7.4.3"/>
    </reaction>
</comment>
<comment type="subunit">
    <text evidence="1">Monomer.</text>
</comment>
<comment type="subcellular location">
    <subcellularLocation>
        <location evidence="1">Cytoplasm</location>
    </subcellularLocation>
</comment>
<comment type="alternative products">
    <event type="alternative splicing"/>
    <isoform>
        <id>O82514-1</id>
        <name>1</name>
        <sequence type="displayed"/>
    </isoform>
    <text>A number of isoforms are produced. According to EST sequences.</text>
</comment>
<comment type="similarity">
    <text evidence="2">Belongs to the adenylate kinase family.</text>
</comment>
<dbReference type="EC" id="2.7.4.3"/>
<dbReference type="EMBL" id="AF082882">
    <property type="protein sequence ID" value="AAC78478.1"/>
    <property type="molecule type" value="mRNA"/>
</dbReference>
<dbReference type="EMBL" id="AB007649">
    <property type="protein sequence ID" value="BAB08805.1"/>
    <property type="molecule type" value="Genomic_DNA"/>
</dbReference>
<dbReference type="EMBL" id="CP002688">
    <property type="protein sequence ID" value="AED97743.1"/>
    <property type="molecule type" value="Genomic_DNA"/>
</dbReference>
<dbReference type="EMBL" id="AY039945">
    <property type="protein sequence ID" value="AAK64049.1"/>
    <property type="molecule type" value="mRNA"/>
</dbReference>
<dbReference type="EMBL" id="AY079340">
    <property type="protein sequence ID" value="AAL85071.1"/>
    <property type="molecule type" value="mRNA"/>
</dbReference>
<dbReference type="EMBL" id="AY085188">
    <property type="protein sequence ID" value="AAM61739.1"/>
    <property type="molecule type" value="mRNA"/>
</dbReference>
<dbReference type="RefSeq" id="NP_201145.1">
    <molecule id="O82514-1"/>
    <property type="nucleotide sequence ID" value="NM_125735.4"/>
</dbReference>
<dbReference type="SMR" id="O82514"/>
<dbReference type="BioGRID" id="21702">
    <property type="interactions" value="2"/>
</dbReference>
<dbReference type="FunCoup" id="O82514">
    <property type="interactions" value="3432"/>
</dbReference>
<dbReference type="STRING" id="3702.O82514"/>
<dbReference type="iPTMnet" id="O82514"/>
<dbReference type="PaxDb" id="3702-AT5G63400.1"/>
<dbReference type="ProteomicsDB" id="232240">
    <molecule id="O82514-1"/>
</dbReference>
<dbReference type="EnsemblPlants" id="AT5G63400.1">
    <molecule id="O82514-1"/>
    <property type="protein sequence ID" value="AT5G63400.1"/>
    <property type="gene ID" value="AT5G63400"/>
</dbReference>
<dbReference type="GeneID" id="836459"/>
<dbReference type="Gramene" id="AT5G63400.1">
    <molecule id="O82514-1"/>
    <property type="protein sequence ID" value="AT5G63400.1"/>
    <property type="gene ID" value="AT5G63400"/>
</dbReference>
<dbReference type="KEGG" id="ath:AT5G63400"/>
<dbReference type="Araport" id="AT5G63400"/>
<dbReference type="TAIR" id="AT5G63400">
    <property type="gene designation" value="ADK1"/>
</dbReference>
<dbReference type="eggNOG" id="KOG3078">
    <property type="taxonomic scope" value="Eukaryota"/>
</dbReference>
<dbReference type="HOGENOM" id="CLU_032354_1_0_1"/>
<dbReference type="InParanoid" id="O82514"/>
<dbReference type="OMA" id="IVKDEYC"/>
<dbReference type="OrthoDB" id="439792at2759"/>
<dbReference type="PhylomeDB" id="O82514"/>
<dbReference type="BioCyc" id="ARA:AT5G63400-MONOMER"/>
<dbReference type="BRENDA" id="2.7.4.3">
    <property type="organism ID" value="399"/>
</dbReference>
<dbReference type="SABIO-RK" id="O82514"/>
<dbReference type="PRO" id="PR:O82514"/>
<dbReference type="Proteomes" id="UP000006548">
    <property type="component" value="Chromosome 5"/>
</dbReference>
<dbReference type="ExpressionAtlas" id="O82514">
    <property type="expression patterns" value="baseline and differential"/>
</dbReference>
<dbReference type="GO" id="GO:0005829">
    <property type="term" value="C:cytosol"/>
    <property type="evidence" value="ECO:0007005"/>
    <property type="project" value="TAIR"/>
</dbReference>
<dbReference type="GO" id="GO:0005739">
    <property type="term" value="C:mitochondrion"/>
    <property type="evidence" value="ECO:0007005"/>
    <property type="project" value="TAIR"/>
</dbReference>
<dbReference type="GO" id="GO:0000325">
    <property type="term" value="C:plant-type vacuole"/>
    <property type="evidence" value="ECO:0007005"/>
    <property type="project" value="TAIR"/>
</dbReference>
<dbReference type="GO" id="GO:0009536">
    <property type="term" value="C:plastid"/>
    <property type="evidence" value="ECO:0007005"/>
    <property type="project" value="TAIR"/>
</dbReference>
<dbReference type="GO" id="GO:0004017">
    <property type="term" value="F:adenylate kinase activity"/>
    <property type="evidence" value="ECO:0007669"/>
    <property type="project" value="UniProtKB-EC"/>
</dbReference>
<dbReference type="GO" id="GO:0005524">
    <property type="term" value="F:ATP binding"/>
    <property type="evidence" value="ECO:0007669"/>
    <property type="project" value="UniProtKB-KW"/>
</dbReference>
<dbReference type="GO" id="GO:0005507">
    <property type="term" value="F:copper ion binding"/>
    <property type="evidence" value="ECO:0007005"/>
    <property type="project" value="TAIR"/>
</dbReference>
<dbReference type="CDD" id="cd01428">
    <property type="entry name" value="ADK"/>
    <property type="match status" value="1"/>
</dbReference>
<dbReference type="FunFam" id="3.40.50.300:FF:000106">
    <property type="entry name" value="Adenylate kinase mitochondrial"/>
    <property type="match status" value="1"/>
</dbReference>
<dbReference type="Gene3D" id="3.40.50.300">
    <property type="entry name" value="P-loop containing nucleotide triphosphate hydrolases"/>
    <property type="match status" value="1"/>
</dbReference>
<dbReference type="HAMAP" id="MF_00235">
    <property type="entry name" value="Adenylate_kinase_Adk"/>
    <property type="match status" value="1"/>
</dbReference>
<dbReference type="InterPro" id="IPR006259">
    <property type="entry name" value="Adenyl_kin_sub"/>
</dbReference>
<dbReference type="InterPro" id="IPR000850">
    <property type="entry name" value="Adenylat/UMP-CMP_kin"/>
</dbReference>
<dbReference type="InterPro" id="IPR033690">
    <property type="entry name" value="Adenylat_kinase_CS"/>
</dbReference>
<dbReference type="InterPro" id="IPR007862">
    <property type="entry name" value="Adenylate_kinase_lid-dom"/>
</dbReference>
<dbReference type="InterPro" id="IPR027417">
    <property type="entry name" value="P-loop_NTPase"/>
</dbReference>
<dbReference type="NCBIfam" id="TIGR01351">
    <property type="entry name" value="adk"/>
    <property type="match status" value="1"/>
</dbReference>
<dbReference type="NCBIfam" id="NF001380">
    <property type="entry name" value="PRK00279.1-2"/>
    <property type="match status" value="1"/>
</dbReference>
<dbReference type="NCBIfam" id="NF001381">
    <property type="entry name" value="PRK00279.1-3"/>
    <property type="match status" value="1"/>
</dbReference>
<dbReference type="PANTHER" id="PTHR23359">
    <property type="entry name" value="NUCLEOTIDE KINASE"/>
    <property type="match status" value="1"/>
</dbReference>
<dbReference type="Pfam" id="PF00406">
    <property type="entry name" value="ADK"/>
    <property type="match status" value="1"/>
</dbReference>
<dbReference type="Pfam" id="PF05191">
    <property type="entry name" value="ADK_lid"/>
    <property type="match status" value="1"/>
</dbReference>
<dbReference type="PRINTS" id="PR00094">
    <property type="entry name" value="ADENYLTKNASE"/>
</dbReference>
<dbReference type="SUPFAM" id="SSF52540">
    <property type="entry name" value="P-loop containing nucleoside triphosphate hydrolases"/>
    <property type="match status" value="1"/>
</dbReference>
<dbReference type="PROSITE" id="PS00113">
    <property type="entry name" value="ADENYLATE_KINASE"/>
    <property type="match status" value="1"/>
</dbReference>
<feature type="initiator methionine" description="Removed" evidence="3">
    <location>
        <position position="1"/>
    </location>
</feature>
<feature type="chain" id="PRO_0000158940" description="Adenylate kinase 4">
    <location>
        <begin position="2"/>
        <end position="246"/>
    </location>
</feature>
<feature type="region of interest" description="NMP" evidence="1">
    <location>
        <begin position="63"/>
        <end position="92"/>
    </location>
</feature>
<feature type="region of interest" description="LID" evidence="1">
    <location>
        <begin position="159"/>
        <end position="196"/>
    </location>
</feature>
<feature type="binding site" evidence="1">
    <location>
        <begin position="43"/>
        <end position="48"/>
    </location>
    <ligand>
        <name>ATP</name>
        <dbReference type="ChEBI" id="CHEBI:30616"/>
    </ligand>
</feature>
<feature type="binding site" evidence="1">
    <location>
        <position position="64"/>
    </location>
    <ligand>
        <name>AMP</name>
        <dbReference type="ChEBI" id="CHEBI:456215"/>
    </ligand>
</feature>
<feature type="binding site" evidence="1">
    <location>
        <position position="69"/>
    </location>
    <ligand>
        <name>AMP</name>
        <dbReference type="ChEBI" id="CHEBI:456215"/>
    </ligand>
</feature>
<feature type="binding site" evidence="1">
    <location>
        <begin position="90"/>
        <end position="92"/>
    </location>
    <ligand>
        <name>AMP</name>
        <dbReference type="ChEBI" id="CHEBI:456215"/>
    </ligand>
</feature>
<feature type="binding site" evidence="1">
    <location>
        <begin position="118"/>
        <end position="121"/>
    </location>
    <ligand>
        <name>AMP</name>
        <dbReference type="ChEBI" id="CHEBI:456215"/>
    </ligand>
</feature>
<feature type="binding site" evidence="1">
    <location>
        <position position="125"/>
    </location>
    <ligand>
        <name>AMP</name>
        <dbReference type="ChEBI" id="CHEBI:456215"/>
    </ligand>
</feature>
<feature type="binding site" evidence="1">
    <location>
        <position position="160"/>
    </location>
    <ligand>
        <name>ATP</name>
        <dbReference type="ChEBI" id="CHEBI:30616"/>
    </ligand>
</feature>
<feature type="binding site" evidence="1">
    <location>
        <position position="193"/>
    </location>
    <ligand>
        <name>AMP</name>
        <dbReference type="ChEBI" id="CHEBI:456215"/>
    </ligand>
</feature>
<feature type="binding site" evidence="1">
    <location>
        <position position="204"/>
    </location>
    <ligand>
        <name>AMP</name>
        <dbReference type="ChEBI" id="CHEBI:456215"/>
    </ligand>
</feature>
<feature type="modified residue" description="N-acetylalanine" evidence="3">
    <location>
        <position position="2"/>
    </location>
</feature>
<feature type="sequence conflict" description="In Ref. 1; AAC78478." evidence="2" ref="1">
    <original>LNFAIDDAI</original>
    <variation>STLLLMTQS</variation>
    <location>
        <begin position="144"/>
        <end position="152"/>
    </location>
</feature>
<name>KAD4_ARATH</name>
<evidence type="ECO:0000250" key="1">
    <source>
        <dbReference type="UniProtKB" id="P69441"/>
    </source>
</evidence>
<evidence type="ECO:0000305" key="2"/>
<evidence type="ECO:0007744" key="3">
    <source>
    </source>
</evidence>
<accession>O82514</accession>
<accession>Q9FMW2</accession>
<gene>
    <name type="primary">ADK1</name>
    <name type="ordered locus">At5g63400</name>
    <name type="ORF">MLE2.3</name>
</gene>
<protein>
    <recommendedName>
        <fullName>Adenylate kinase 4</fullName>
        <shortName>AK 4</shortName>
        <ecNumber>2.7.4.3</ecNumber>
    </recommendedName>
    <alternativeName>
        <fullName>ATP-AMP transphosphorylase 4</fullName>
    </alternativeName>
    <alternativeName>
        <fullName>ATP:AMP phosphotransferase</fullName>
    </alternativeName>
    <alternativeName>
        <fullName>Adenylate monophosphate kinase 4</fullName>
        <shortName>AMK4</shortName>
    </alternativeName>
</protein>
<proteinExistence type="evidence at protein level"/>
<reference key="1">
    <citation type="online journal article" date="1998" name="Plant Gene Register">
        <title>Characterization of the cDNA and gene for the Arabidopsis thaliana adenylate kinase.</title>
        <authorList>
            <person name="Weers B."/>
            <person name="Thornburg R."/>
        </authorList>
        <locator>PGR98-166</locator>
    </citation>
    <scope>NUCLEOTIDE SEQUENCE [MRNA]</scope>
    <source>
        <strain>cv. Columbia</strain>
    </source>
</reference>
<reference key="2">
    <citation type="journal article" date="1997" name="DNA Res.">
        <title>Structural analysis of Arabidopsis thaliana chromosome 5. III. Sequence features of the regions of 1,191,918 bp covered by seventeen physically assigned P1 clones.</title>
        <authorList>
            <person name="Nakamura Y."/>
            <person name="Sato S."/>
            <person name="Kaneko T."/>
            <person name="Kotani H."/>
            <person name="Asamizu E."/>
            <person name="Miyajima N."/>
            <person name="Tabata S."/>
        </authorList>
    </citation>
    <scope>NUCLEOTIDE SEQUENCE [LARGE SCALE GENOMIC DNA]</scope>
    <source>
        <strain>cv. Columbia</strain>
    </source>
</reference>
<reference key="3">
    <citation type="journal article" date="2017" name="Plant J.">
        <title>Araport11: a complete reannotation of the Arabidopsis thaliana reference genome.</title>
        <authorList>
            <person name="Cheng C.Y."/>
            <person name="Krishnakumar V."/>
            <person name="Chan A.P."/>
            <person name="Thibaud-Nissen F."/>
            <person name="Schobel S."/>
            <person name="Town C.D."/>
        </authorList>
    </citation>
    <scope>GENOME REANNOTATION</scope>
    <source>
        <strain>cv. Columbia</strain>
    </source>
</reference>
<reference key="4">
    <citation type="journal article" date="2003" name="Science">
        <title>Empirical analysis of transcriptional activity in the Arabidopsis genome.</title>
        <authorList>
            <person name="Yamada K."/>
            <person name="Lim J."/>
            <person name="Dale J.M."/>
            <person name="Chen H."/>
            <person name="Shinn P."/>
            <person name="Palm C.J."/>
            <person name="Southwick A.M."/>
            <person name="Wu H.C."/>
            <person name="Kim C.J."/>
            <person name="Nguyen M."/>
            <person name="Pham P.K."/>
            <person name="Cheuk R.F."/>
            <person name="Karlin-Newmann G."/>
            <person name="Liu S.X."/>
            <person name="Lam B."/>
            <person name="Sakano H."/>
            <person name="Wu T."/>
            <person name="Yu G."/>
            <person name="Miranda M."/>
            <person name="Quach H.L."/>
            <person name="Tripp M."/>
            <person name="Chang C.H."/>
            <person name="Lee J.M."/>
            <person name="Toriumi M.J."/>
            <person name="Chan M.M."/>
            <person name="Tang C.C."/>
            <person name="Onodera C.S."/>
            <person name="Deng J.M."/>
            <person name="Akiyama K."/>
            <person name="Ansari Y."/>
            <person name="Arakawa T."/>
            <person name="Banh J."/>
            <person name="Banno F."/>
            <person name="Bowser L."/>
            <person name="Brooks S.Y."/>
            <person name="Carninci P."/>
            <person name="Chao Q."/>
            <person name="Choy N."/>
            <person name="Enju A."/>
            <person name="Goldsmith A.D."/>
            <person name="Gurjal M."/>
            <person name="Hansen N.F."/>
            <person name="Hayashizaki Y."/>
            <person name="Johnson-Hopson C."/>
            <person name="Hsuan V.W."/>
            <person name="Iida K."/>
            <person name="Karnes M."/>
            <person name="Khan S."/>
            <person name="Koesema E."/>
            <person name="Ishida J."/>
            <person name="Jiang P.X."/>
            <person name="Jones T."/>
            <person name="Kawai J."/>
            <person name="Kamiya A."/>
            <person name="Meyers C."/>
            <person name="Nakajima M."/>
            <person name="Narusaka M."/>
            <person name="Seki M."/>
            <person name="Sakurai T."/>
            <person name="Satou M."/>
            <person name="Tamse R."/>
            <person name="Vaysberg M."/>
            <person name="Wallender E.K."/>
            <person name="Wong C."/>
            <person name="Yamamura Y."/>
            <person name="Yuan S."/>
            <person name="Shinozaki K."/>
            <person name="Davis R.W."/>
            <person name="Theologis A."/>
            <person name="Ecker J.R."/>
        </authorList>
    </citation>
    <scope>NUCLEOTIDE SEQUENCE [LARGE SCALE MRNA]</scope>
    <source>
        <strain>cv. Columbia</strain>
    </source>
</reference>
<reference key="5">
    <citation type="submission" date="2002-03" db="EMBL/GenBank/DDBJ databases">
        <title>Full-length cDNA from Arabidopsis thaliana.</title>
        <authorList>
            <person name="Brover V.V."/>
            <person name="Troukhan M.E."/>
            <person name="Alexandrov N.A."/>
            <person name="Lu Y.-P."/>
            <person name="Flavell R.B."/>
            <person name="Feldmann K.A."/>
        </authorList>
    </citation>
    <scope>NUCLEOTIDE SEQUENCE [LARGE SCALE MRNA]</scope>
</reference>
<reference key="6">
    <citation type="journal article" date="2012" name="Mol. Cell. Proteomics">
        <title>Comparative large-scale characterisation of plant vs. mammal proteins reveals similar and idiosyncratic N-alpha acetylation features.</title>
        <authorList>
            <person name="Bienvenut W.V."/>
            <person name="Sumpton D."/>
            <person name="Martinez A."/>
            <person name="Lilla S."/>
            <person name="Espagne C."/>
            <person name="Meinnel T."/>
            <person name="Giglione C."/>
        </authorList>
    </citation>
    <scope>ACETYLATION [LARGE SCALE ANALYSIS] AT ALA-2</scope>
    <scope>CLEAVAGE OF INITIATOR METHIONINE [LARGE SCALE ANALYSIS]</scope>
    <scope>IDENTIFICATION BY MASS SPECTROMETRY [LARGE SCALE ANALYSIS]</scope>
</reference>
<organism>
    <name type="scientific">Arabidopsis thaliana</name>
    <name type="common">Mouse-ear cress</name>
    <dbReference type="NCBI Taxonomy" id="3702"/>
    <lineage>
        <taxon>Eukaryota</taxon>
        <taxon>Viridiplantae</taxon>
        <taxon>Streptophyta</taxon>
        <taxon>Embryophyta</taxon>
        <taxon>Tracheophyta</taxon>
        <taxon>Spermatophyta</taxon>
        <taxon>Magnoliopsida</taxon>
        <taxon>eudicotyledons</taxon>
        <taxon>Gunneridae</taxon>
        <taxon>Pentapetalae</taxon>
        <taxon>rosids</taxon>
        <taxon>malvids</taxon>
        <taxon>Brassicales</taxon>
        <taxon>Brassicaceae</taxon>
        <taxon>Camelineae</taxon>
        <taxon>Arabidopsis</taxon>
    </lineage>
</organism>
<keyword id="KW-0007">Acetylation</keyword>
<keyword id="KW-0025">Alternative splicing</keyword>
<keyword id="KW-0067">ATP-binding</keyword>
<keyword id="KW-0963">Cytoplasm</keyword>
<keyword id="KW-0418">Kinase</keyword>
<keyword id="KW-0547">Nucleotide-binding</keyword>
<keyword id="KW-1185">Reference proteome</keyword>
<keyword id="KW-0808">Transferase</keyword>
<sequence length="246" mass="26932">MATGGAAADLEDVQTVDLMSELLRRLKCSQKPDKRLIFIGPPGSGKGTQSPVVKDEYCLCHLSTGDMLRAAVASKTPLGVKAKEAMEKGELVSDDLVVGIIDEAMNKPKCQKGFILDGFPRTVTQAEKLDEMLKRRGTEIDKVLNFAIDDAILEERITGRWIHPSSGRSYHTKFAPPKTPGVDDITGEPLIQRKDDNADVLKSRLAAFHSQTQPVIDYYAKKAVLTNIQAEKAPQEVTSEVKKALS</sequence>